<gene>
    <name evidence="1" type="primary">pcm</name>
    <name type="ordered locus">Patl_3861</name>
</gene>
<keyword id="KW-0963">Cytoplasm</keyword>
<keyword id="KW-0489">Methyltransferase</keyword>
<keyword id="KW-0949">S-adenosyl-L-methionine</keyword>
<keyword id="KW-0808">Transferase</keyword>
<accession>Q15P27</accession>
<sequence>MRVSSRKGESLAHLLKQEGIVNASVLNAVACTPRELFLPDALRHKAYQNTALPIGQGQTISQPYIVAKMTELLLASSNAPKAVLEIGTGSGYQTAILAQLFDKVFSVERIKSLQFQAKRRMNQLDLHNVSMKHGDGWQGWSSKGPFDAIIVTAAASQVPAKLVEQLNDGGRLIIPVGEQSQQLHCITRVGEGFNEQIIEAVRFVPLVAGDII</sequence>
<proteinExistence type="inferred from homology"/>
<organism>
    <name type="scientific">Pseudoalteromonas atlantica (strain T6c / ATCC BAA-1087)</name>
    <dbReference type="NCBI Taxonomy" id="3042615"/>
    <lineage>
        <taxon>Bacteria</taxon>
        <taxon>Pseudomonadati</taxon>
        <taxon>Pseudomonadota</taxon>
        <taxon>Gammaproteobacteria</taxon>
        <taxon>Alteromonadales</taxon>
        <taxon>Alteromonadaceae</taxon>
        <taxon>Paraglaciecola</taxon>
    </lineage>
</organism>
<feature type="chain" id="PRO_0000351904" description="Protein-L-isoaspartate O-methyltransferase">
    <location>
        <begin position="1"/>
        <end position="212"/>
    </location>
</feature>
<feature type="active site" evidence="1">
    <location>
        <position position="61"/>
    </location>
</feature>
<protein>
    <recommendedName>
        <fullName evidence="1">Protein-L-isoaspartate O-methyltransferase</fullName>
        <ecNumber evidence="1">2.1.1.77</ecNumber>
    </recommendedName>
    <alternativeName>
        <fullName evidence="1">L-isoaspartyl protein carboxyl methyltransferase</fullName>
    </alternativeName>
    <alternativeName>
        <fullName evidence="1">Protein L-isoaspartyl methyltransferase</fullName>
    </alternativeName>
    <alternativeName>
        <fullName evidence="1">Protein-beta-aspartate methyltransferase</fullName>
        <shortName evidence="1">PIMT</shortName>
    </alternativeName>
</protein>
<comment type="function">
    <text evidence="1">Catalyzes the methyl esterification of L-isoaspartyl residues in peptides and proteins that result from spontaneous decomposition of normal L-aspartyl and L-asparaginyl residues. It plays a role in the repair and/or degradation of damaged proteins.</text>
</comment>
<comment type="catalytic activity">
    <reaction evidence="1">
        <text>[protein]-L-isoaspartate + S-adenosyl-L-methionine = [protein]-L-isoaspartate alpha-methyl ester + S-adenosyl-L-homocysteine</text>
        <dbReference type="Rhea" id="RHEA:12705"/>
        <dbReference type="Rhea" id="RHEA-COMP:12143"/>
        <dbReference type="Rhea" id="RHEA-COMP:12144"/>
        <dbReference type="ChEBI" id="CHEBI:57856"/>
        <dbReference type="ChEBI" id="CHEBI:59789"/>
        <dbReference type="ChEBI" id="CHEBI:90596"/>
        <dbReference type="ChEBI" id="CHEBI:90598"/>
        <dbReference type="EC" id="2.1.1.77"/>
    </reaction>
</comment>
<comment type="subcellular location">
    <subcellularLocation>
        <location evidence="1">Cytoplasm</location>
    </subcellularLocation>
</comment>
<comment type="similarity">
    <text evidence="1">Belongs to the methyltransferase superfamily. L-isoaspartyl/D-aspartyl protein methyltransferase family.</text>
</comment>
<evidence type="ECO:0000255" key="1">
    <source>
        <dbReference type="HAMAP-Rule" id="MF_00090"/>
    </source>
</evidence>
<reference key="1">
    <citation type="submission" date="2006-06" db="EMBL/GenBank/DDBJ databases">
        <title>Complete sequence of Pseudoalteromonas atlantica T6c.</title>
        <authorList>
            <consortium name="US DOE Joint Genome Institute"/>
            <person name="Copeland A."/>
            <person name="Lucas S."/>
            <person name="Lapidus A."/>
            <person name="Barry K."/>
            <person name="Detter J.C."/>
            <person name="Glavina del Rio T."/>
            <person name="Hammon N."/>
            <person name="Israni S."/>
            <person name="Dalin E."/>
            <person name="Tice H."/>
            <person name="Pitluck S."/>
            <person name="Saunders E."/>
            <person name="Brettin T."/>
            <person name="Bruce D."/>
            <person name="Han C."/>
            <person name="Tapia R."/>
            <person name="Gilna P."/>
            <person name="Schmutz J."/>
            <person name="Larimer F."/>
            <person name="Land M."/>
            <person name="Hauser L."/>
            <person name="Kyrpides N."/>
            <person name="Kim E."/>
            <person name="Karls A.C."/>
            <person name="Bartlett D."/>
            <person name="Higgins B.P."/>
            <person name="Richardson P."/>
        </authorList>
    </citation>
    <scope>NUCLEOTIDE SEQUENCE [LARGE SCALE GENOMIC DNA]</scope>
    <source>
        <strain>T6c / ATCC BAA-1087</strain>
    </source>
</reference>
<name>PIMT_PSEA6</name>
<dbReference type="EC" id="2.1.1.77" evidence="1"/>
<dbReference type="EMBL" id="CP000388">
    <property type="protein sequence ID" value="ABG42361.1"/>
    <property type="molecule type" value="Genomic_DNA"/>
</dbReference>
<dbReference type="RefSeq" id="WP_011576569.1">
    <property type="nucleotide sequence ID" value="NC_008228.1"/>
</dbReference>
<dbReference type="SMR" id="Q15P27"/>
<dbReference type="STRING" id="342610.Patl_3861"/>
<dbReference type="KEGG" id="pat:Patl_3861"/>
<dbReference type="eggNOG" id="COG2518">
    <property type="taxonomic scope" value="Bacteria"/>
</dbReference>
<dbReference type="HOGENOM" id="CLU_055432_2_0_6"/>
<dbReference type="OrthoDB" id="9810066at2"/>
<dbReference type="Proteomes" id="UP000001981">
    <property type="component" value="Chromosome"/>
</dbReference>
<dbReference type="GO" id="GO:0005737">
    <property type="term" value="C:cytoplasm"/>
    <property type="evidence" value="ECO:0007669"/>
    <property type="project" value="UniProtKB-SubCell"/>
</dbReference>
<dbReference type="GO" id="GO:0004719">
    <property type="term" value="F:protein-L-isoaspartate (D-aspartate) O-methyltransferase activity"/>
    <property type="evidence" value="ECO:0007669"/>
    <property type="project" value="UniProtKB-UniRule"/>
</dbReference>
<dbReference type="GO" id="GO:0032259">
    <property type="term" value="P:methylation"/>
    <property type="evidence" value="ECO:0007669"/>
    <property type="project" value="UniProtKB-KW"/>
</dbReference>
<dbReference type="GO" id="GO:0036211">
    <property type="term" value="P:protein modification process"/>
    <property type="evidence" value="ECO:0007669"/>
    <property type="project" value="UniProtKB-UniRule"/>
</dbReference>
<dbReference type="GO" id="GO:0030091">
    <property type="term" value="P:protein repair"/>
    <property type="evidence" value="ECO:0007669"/>
    <property type="project" value="UniProtKB-UniRule"/>
</dbReference>
<dbReference type="CDD" id="cd02440">
    <property type="entry name" value="AdoMet_MTases"/>
    <property type="match status" value="1"/>
</dbReference>
<dbReference type="FunFam" id="3.40.50.150:FF:000010">
    <property type="entry name" value="Protein-L-isoaspartate O-methyltransferase"/>
    <property type="match status" value="1"/>
</dbReference>
<dbReference type="Gene3D" id="3.40.50.150">
    <property type="entry name" value="Vaccinia Virus protein VP39"/>
    <property type="match status" value="1"/>
</dbReference>
<dbReference type="HAMAP" id="MF_00090">
    <property type="entry name" value="PIMT"/>
    <property type="match status" value="1"/>
</dbReference>
<dbReference type="InterPro" id="IPR000682">
    <property type="entry name" value="PCMT"/>
</dbReference>
<dbReference type="InterPro" id="IPR029063">
    <property type="entry name" value="SAM-dependent_MTases_sf"/>
</dbReference>
<dbReference type="NCBIfam" id="TIGR00080">
    <property type="entry name" value="pimt"/>
    <property type="match status" value="1"/>
</dbReference>
<dbReference type="NCBIfam" id="NF001453">
    <property type="entry name" value="PRK00312.1"/>
    <property type="match status" value="1"/>
</dbReference>
<dbReference type="PANTHER" id="PTHR11579">
    <property type="entry name" value="PROTEIN-L-ISOASPARTATE O-METHYLTRANSFERASE"/>
    <property type="match status" value="1"/>
</dbReference>
<dbReference type="PANTHER" id="PTHR11579:SF0">
    <property type="entry name" value="PROTEIN-L-ISOASPARTATE(D-ASPARTATE) O-METHYLTRANSFERASE"/>
    <property type="match status" value="1"/>
</dbReference>
<dbReference type="Pfam" id="PF01135">
    <property type="entry name" value="PCMT"/>
    <property type="match status" value="1"/>
</dbReference>
<dbReference type="SUPFAM" id="SSF53335">
    <property type="entry name" value="S-adenosyl-L-methionine-dependent methyltransferases"/>
    <property type="match status" value="1"/>
</dbReference>
<dbReference type="PROSITE" id="PS01279">
    <property type="entry name" value="PCMT"/>
    <property type="match status" value="1"/>
</dbReference>